<name>RSMH_CLASE</name>
<accession>B0RI49</accession>
<evidence type="ECO:0000255" key="1">
    <source>
        <dbReference type="HAMAP-Rule" id="MF_01007"/>
    </source>
</evidence>
<dbReference type="EC" id="2.1.1.199" evidence="1"/>
<dbReference type="EMBL" id="AM849034">
    <property type="protein sequence ID" value="CAQ01476.1"/>
    <property type="molecule type" value="Genomic_DNA"/>
</dbReference>
<dbReference type="RefSeq" id="WP_012298743.1">
    <property type="nucleotide sequence ID" value="NZ_MZMN01000003.1"/>
</dbReference>
<dbReference type="SMR" id="B0RI49"/>
<dbReference type="STRING" id="31964.CMS1365"/>
<dbReference type="KEGG" id="cms:CMS1365"/>
<dbReference type="eggNOG" id="COG0275">
    <property type="taxonomic scope" value="Bacteria"/>
</dbReference>
<dbReference type="HOGENOM" id="CLU_038422_0_0_11"/>
<dbReference type="OrthoDB" id="9806637at2"/>
<dbReference type="Proteomes" id="UP000001318">
    <property type="component" value="Chromosome"/>
</dbReference>
<dbReference type="GO" id="GO:0005737">
    <property type="term" value="C:cytoplasm"/>
    <property type="evidence" value="ECO:0007669"/>
    <property type="project" value="UniProtKB-SubCell"/>
</dbReference>
<dbReference type="GO" id="GO:0071424">
    <property type="term" value="F:rRNA (cytosine-N4-)-methyltransferase activity"/>
    <property type="evidence" value="ECO:0007669"/>
    <property type="project" value="UniProtKB-UniRule"/>
</dbReference>
<dbReference type="GO" id="GO:0070475">
    <property type="term" value="P:rRNA base methylation"/>
    <property type="evidence" value="ECO:0007669"/>
    <property type="project" value="UniProtKB-UniRule"/>
</dbReference>
<dbReference type="Gene3D" id="1.10.150.170">
    <property type="entry name" value="Putative methyltransferase TM0872, insert domain"/>
    <property type="match status" value="1"/>
</dbReference>
<dbReference type="Gene3D" id="3.40.50.150">
    <property type="entry name" value="Vaccinia Virus protein VP39"/>
    <property type="match status" value="1"/>
</dbReference>
<dbReference type="HAMAP" id="MF_01007">
    <property type="entry name" value="16SrRNA_methyltr_H"/>
    <property type="match status" value="1"/>
</dbReference>
<dbReference type="InterPro" id="IPR002903">
    <property type="entry name" value="RsmH"/>
</dbReference>
<dbReference type="InterPro" id="IPR023397">
    <property type="entry name" value="SAM-dep_MeTrfase_MraW_recog"/>
</dbReference>
<dbReference type="InterPro" id="IPR029063">
    <property type="entry name" value="SAM-dependent_MTases_sf"/>
</dbReference>
<dbReference type="NCBIfam" id="TIGR00006">
    <property type="entry name" value="16S rRNA (cytosine(1402)-N(4))-methyltransferase RsmH"/>
    <property type="match status" value="1"/>
</dbReference>
<dbReference type="PANTHER" id="PTHR11265:SF0">
    <property type="entry name" value="12S RRNA N4-METHYLCYTIDINE METHYLTRANSFERASE"/>
    <property type="match status" value="1"/>
</dbReference>
<dbReference type="PANTHER" id="PTHR11265">
    <property type="entry name" value="S-ADENOSYL-METHYLTRANSFERASE MRAW"/>
    <property type="match status" value="1"/>
</dbReference>
<dbReference type="Pfam" id="PF01795">
    <property type="entry name" value="Methyltransf_5"/>
    <property type="match status" value="1"/>
</dbReference>
<dbReference type="PIRSF" id="PIRSF004486">
    <property type="entry name" value="MraW"/>
    <property type="match status" value="1"/>
</dbReference>
<dbReference type="SUPFAM" id="SSF81799">
    <property type="entry name" value="Putative methyltransferase TM0872, insert domain"/>
    <property type="match status" value="1"/>
</dbReference>
<dbReference type="SUPFAM" id="SSF53335">
    <property type="entry name" value="S-adenosyl-L-methionine-dependent methyltransferases"/>
    <property type="match status" value="1"/>
</dbReference>
<proteinExistence type="inferred from homology"/>
<comment type="function">
    <text evidence="1">Specifically methylates the N4 position of cytidine in position 1402 (C1402) of 16S rRNA.</text>
</comment>
<comment type="catalytic activity">
    <reaction evidence="1">
        <text>cytidine(1402) in 16S rRNA + S-adenosyl-L-methionine = N(4)-methylcytidine(1402) in 16S rRNA + S-adenosyl-L-homocysteine + H(+)</text>
        <dbReference type="Rhea" id="RHEA:42928"/>
        <dbReference type="Rhea" id="RHEA-COMP:10286"/>
        <dbReference type="Rhea" id="RHEA-COMP:10287"/>
        <dbReference type="ChEBI" id="CHEBI:15378"/>
        <dbReference type="ChEBI" id="CHEBI:57856"/>
        <dbReference type="ChEBI" id="CHEBI:59789"/>
        <dbReference type="ChEBI" id="CHEBI:74506"/>
        <dbReference type="ChEBI" id="CHEBI:82748"/>
        <dbReference type="EC" id="2.1.1.199"/>
    </reaction>
</comment>
<comment type="subcellular location">
    <subcellularLocation>
        <location evidence="1">Cytoplasm</location>
    </subcellularLocation>
</comment>
<comment type="similarity">
    <text evidence="1">Belongs to the methyltransferase superfamily. RsmH family.</text>
</comment>
<feature type="chain" id="PRO_0000386808" description="Ribosomal RNA small subunit methyltransferase H">
    <location>
        <begin position="1"/>
        <end position="318"/>
    </location>
</feature>
<feature type="binding site" evidence="1">
    <location>
        <begin position="38"/>
        <end position="40"/>
    </location>
    <ligand>
        <name>S-adenosyl-L-methionine</name>
        <dbReference type="ChEBI" id="CHEBI:59789"/>
    </ligand>
</feature>
<feature type="binding site" evidence="1">
    <location>
        <position position="57"/>
    </location>
    <ligand>
        <name>S-adenosyl-L-methionine</name>
        <dbReference type="ChEBI" id="CHEBI:59789"/>
    </ligand>
</feature>
<feature type="binding site" evidence="1">
    <location>
        <position position="91"/>
    </location>
    <ligand>
        <name>S-adenosyl-L-methionine</name>
        <dbReference type="ChEBI" id="CHEBI:59789"/>
    </ligand>
</feature>
<feature type="binding site" evidence="1">
    <location>
        <position position="105"/>
    </location>
    <ligand>
        <name>S-adenosyl-L-methionine</name>
        <dbReference type="ChEBI" id="CHEBI:59789"/>
    </ligand>
</feature>
<feature type="binding site" evidence="1">
    <location>
        <position position="112"/>
    </location>
    <ligand>
        <name>S-adenosyl-L-methionine</name>
        <dbReference type="ChEBI" id="CHEBI:59789"/>
    </ligand>
</feature>
<gene>
    <name evidence="1" type="primary">rsmH</name>
    <name type="synonym">mraW</name>
    <name type="ordered locus">CMS1365</name>
</gene>
<sequence>MALDDIHTPVLLERCLELLAPALQGEGAVLVDATLGMAGHSEAFLDALPGLRLVGLDRDPDALAIAGERLARFGDRVHLVHTVYDGIGRALDGLGIGEVQGVFFDLGVSSLQLDRVERGFSYSQDAPLDMRMDGTAGLTAAQVVAEYDELELRRIFYDYGEEKLAPRYASRIVQAREVEPITTSARLVEIIQQATPAAVQRAGHPAKRVFQALRIEVNQELSVLARAMPAAIDRLAVGGRVVVESYQSLEDRIVKRELRVRSTSTAPVGLPVELPEHRPELKLLVRGAELADQHEIAQNPRAASVRLRAAERARRRHA</sequence>
<protein>
    <recommendedName>
        <fullName evidence="1">Ribosomal RNA small subunit methyltransferase H</fullName>
        <ecNumber evidence="1">2.1.1.199</ecNumber>
    </recommendedName>
    <alternativeName>
        <fullName evidence="1">16S rRNA m(4)C1402 methyltransferase</fullName>
    </alternativeName>
    <alternativeName>
        <fullName evidence="1">rRNA (cytosine-N(4)-)-methyltransferase RsmH</fullName>
    </alternativeName>
</protein>
<organism>
    <name type="scientific">Clavibacter sepedonicus</name>
    <name type="common">Clavibacter michiganensis subsp. sepedonicus</name>
    <dbReference type="NCBI Taxonomy" id="31964"/>
    <lineage>
        <taxon>Bacteria</taxon>
        <taxon>Bacillati</taxon>
        <taxon>Actinomycetota</taxon>
        <taxon>Actinomycetes</taxon>
        <taxon>Micrococcales</taxon>
        <taxon>Microbacteriaceae</taxon>
        <taxon>Clavibacter</taxon>
    </lineage>
</organism>
<keyword id="KW-0963">Cytoplasm</keyword>
<keyword id="KW-0489">Methyltransferase</keyword>
<keyword id="KW-0698">rRNA processing</keyword>
<keyword id="KW-0949">S-adenosyl-L-methionine</keyword>
<keyword id="KW-0808">Transferase</keyword>
<reference key="1">
    <citation type="journal article" date="2008" name="J. Bacteriol.">
        <title>Genome of the actinomycete plant pathogen Clavibacter michiganensis subsp. sepedonicus suggests recent niche adaptation.</title>
        <authorList>
            <person name="Bentley S.D."/>
            <person name="Corton C."/>
            <person name="Brown S.E."/>
            <person name="Barron A."/>
            <person name="Clark L."/>
            <person name="Doggett J."/>
            <person name="Harris B."/>
            <person name="Ormond D."/>
            <person name="Quail M.A."/>
            <person name="May G."/>
            <person name="Francis D."/>
            <person name="Knudson D."/>
            <person name="Parkhill J."/>
            <person name="Ishimaru C.A."/>
        </authorList>
    </citation>
    <scope>NUCLEOTIDE SEQUENCE [LARGE SCALE GENOMIC DNA]</scope>
    <source>
        <strain>ATCC 33113 / DSM 20744 / JCM 9667 / LMG 2889 / ICMP 2535 / C-1</strain>
    </source>
</reference>